<feature type="chain" id="PRO_0000229372" description="tRNA pseudouridine synthase B">
    <location>
        <begin position="1"/>
        <end position="305"/>
    </location>
</feature>
<feature type="active site" description="Nucleophile" evidence="1">
    <location>
        <position position="48"/>
    </location>
</feature>
<reference key="1">
    <citation type="journal article" date="2009" name="Genome Biol.">
        <title>Genomic and genetic analyses of diversity and plant interactions of Pseudomonas fluorescens.</title>
        <authorList>
            <person name="Silby M.W."/>
            <person name="Cerdeno-Tarraga A.M."/>
            <person name="Vernikos G.S."/>
            <person name="Giddens S.R."/>
            <person name="Jackson R.W."/>
            <person name="Preston G.M."/>
            <person name="Zhang X.-X."/>
            <person name="Moon C.D."/>
            <person name="Gehrig S.M."/>
            <person name="Godfrey S.A.C."/>
            <person name="Knight C.G."/>
            <person name="Malone J.G."/>
            <person name="Robinson Z."/>
            <person name="Spiers A.J."/>
            <person name="Harris S."/>
            <person name="Challis G.L."/>
            <person name="Yaxley A.M."/>
            <person name="Harris D."/>
            <person name="Seeger K."/>
            <person name="Murphy L."/>
            <person name="Rutter S."/>
            <person name="Squares R."/>
            <person name="Quail M.A."/>
            <person name="Saunders E."/>
            <person name="Mavromatis K."/>
            <person name="Brettin T.S."/>
            <person name="Bentley S.D."/>
            <person name="Hothersall J."/>
            <person name="Stephens E."/>
            <person name="Thomas C.M."/>
            <person name="Parkhill J."/>
            <person name="Levy S.B."/>
            <person name="Rainey P.B."/>
            <person name="Thomson N.R."/>
        </authorList>
    </citation>
    <scope>NUCLEOTIDE SEQUENCE [LARGE SCALE GENOMIC DNA]</scope>
    <source>
        <strain>Pf0-1</strain>
    </source>
</reference>
<keyword id="KW-0413">Isomerase</keyword>
<keyword id="KW-0819">tRNA processing</keyword>
<protein>
    <recommendedName>
        <fullName evidence="1">tRNA pseudouridine synthase B</fullName>
        <ecNumber evidence="1">5.4.99.25</ecNumber>
    </recommendedName>
    <alternativeName>
        <fullName evidence="1">tRNA pseudouridine(55) synthase</fullName>
        <shortName evidence="1">Psi55 synthase</shortName>
    </alternativeName>
    <alternativeName>
        <fullName evidence="1">tRNA pseudouridylate synthase</fullName>
    </alternativeName>
    <alternativeName>
        <fullName evidence="1">tRNA-uridine isomerase</fullName>
    </alternativeName>
</protein>
<name>TRUB_PSEPF</name>
<evidence type="ECO:0000255" key="1">
    <source>
        <dbReference type="HAMAP-Rule" id="MF_01080"/>
    </source>
</evidence>
<organism>
    <name type="scientific">Pseudomonas fluorescens (strain Pf0-1)</name>
    <dbReference type="NCBI Taxonomy" id="205922"/>
    <lineage>
        <taxon>Bacteria</taxon>
        <taxon>Pseudomonadati</taxon>
        <taxon>Pseudomonadota</taxon>
        <taxon>Gammaproteobacteria</taxon>
        <taxon>Pseudomonadales</taxon>
        <taxon>Pseudomonadaceae</taxon>
        <taxon>Pseudomonas</taxon>
    </lineage>
</organism>
<dbReference type="EC" id="5.4.99.25" evidence="1"/>
<dbReference type="EMBL" id="CP000094">
    <property type="protein sequence ID" value="ABA72524.1"/>
    <property type="molecule type" value="Genomic_DNA"/>
</dbReference>
<dbReference type="RefSeq" id="WP_007953739.1">
    <property type="nucleotide sequence ID" value="NC_007492.2"/>
</dbReference>
<dbReference type="SMR" id="Q3KI82"/>
<dbReference type="KEGG" id="pfo:Pfl01_0781"/>
<dbReference type="eggNOG" id="COG0130">
    <property type="taxonomic scope" value="Bacteria"/>
</dbReference>
<dbReference type="HOGENOM" id="CLU_032087_0_3_6"/>
<dbReference type="Proteomes" id="UP000002704">
    <property type="component" value="Chromosome"/>
</dbReference>
<dbReference type="GO" id="GO:0003723">
    <property type="term" value="F:RNA binding"/>
    <property type="evidence" value="ECO:0007669"/>
    <property type="project" value="InterPro"/>
</dbReference>
<dbReference type="GO" id="GO:0160148">
    <property type="term" value="F:tRNA pseudouridine(55) synthase activity"/>
    <property type="evidence" value="ECO:0007669"/>
    <property type="project" value="UniProtKB-EC"/>
</dbReference>
<dbReference type="GO" id="GO:1990481">
    <property type="term" value="P:mRNA pseudouridine synthesis"/>
    <property type="evidence" value="ECO:0007669"/>
    <property type="project" value="TreeGrafter"/>
</dbReference>
<dbReference type="GO" id="GO:0031119">
    <property type="term" value="P:tRNA pseudouridine synthesis"/>
    <property type="evidence" value="ECO:0007669"/>
    <property type="project" value="UniProtKB-UniRule"/>
</dbReference>
<dbReference type="CDD" id="cd02573">
    <property type="entry name" value="PseudoU_synth_EcTruB"/>
    <property type="match status" value="1"/>
</dbReference>
<dbReference type="CDD" id="cd21152">
    <property type="entry name" value="PUA_TruB_bacterial"/>
    <property type="match status" value="1"/>
</dbReference>
<dbReference type="FunFam" id="2.30.130.10:FF:000012">
    <property type="entry name" value="tRNA pseudouridine synthase B"/>
    <property type="match status" value="1"/>
</dbReference>
<dbReference type="FunFam" id="3.30.2350.10:FF:000011">
    <property type="entry name" value="tRNA pseudouridine synthase B"/>
    <property type="match status" value="1"/>
</dbReference>
<dbReference type="Gene3D" id="3.30.2350.10">
    <property type="entry name" value="Pseudouridine synthase"/>
    <property type="match status" value="1"/>
</dbReference>
<dbReference type="Gene3D" id="2.30.130.10">
    <property type="entry name" value="PUA domain"/>
    <property type="match status" value="1"/>
</dbReference>
<dbReference type="HAMAP" id="MF_01080">
    <property type="entry name" value="TruB_bact"/>
    <property type="match status" value="1"/>
</dbReference>
<dbReference type="InterPro" id="IPR020103">
    <property type="entry name" value="PsdUridine_synth_cat_dom_sf"/>
</dbReference>
<dbReference type="InterPro" id="IPR002501">
    <property type="entry name" value="PsdUridine_synth_N"/>
</dbReference>
<dbReference type="InterPro" id="IPR015947">
    <property type="entry name" value="PUA-like_sf"/>
</dbReference>
<dbReference type="InterPro" id="IPR036974">
    <property type="entry name" value="PUA_sf"/>
</dbReference>
<dbReference type="InterPro" id="IPR014780">
    <property type="entry name" value="tRNA_psdUridine_synth_TruB"/>
</dbReference>
<dbReference type="InterPro" id="IPR015240">
    <property type="entry name" value="tRNA_sdUridine_synth_fam1_C"/>
</dbReference>
<dbReference type="InterPro" id="IPR032819">
    <property type="entry name" value="TruB_C"/>
</dbReference>
<dbReference type="NCBIfam" id="TIGR00431">
    <property type="entry name" value="TruB"/>
    <property type="match status" value="1"/>
</dbReference>
<dbReference type="PANTHER" id="PTHR13767:SF2">
    <property type="entry name" value="PSEUDOURIDYLATE SYNTHASE TRUB1"/>
    <property type="match status" value="1"/>
</dbReference>
<dbReference type="PANTHER" id="PTHR13767">
    <property type="entry name" value="TRNA-PSEUDOURIDINE SYNTHASE"/>
    <property type="match status" value="1"/>
</dbReference>
<dbReference type="Pfam" id="PF09157">
    <property type="entry name" value="TruB-C_2"/>
    <property type="match status" value="1"/>
</dbReference>
<dbReference type="Pfam" id="PF16198">
    <property type="entry name" value="TruB_C_2"/>
    <property type="match status" value="1"/>
</dbReference>
<dbReference type="Pfam" id="PF01509">
    <property type="entry name" value="TruB_N"/>
    <property type="match status" value="1"/>
</dbReference>
<dbReference type="SUPFAM" id="SSF55120">
    <property type="entry name" value="Pseudouridine synthase"/>
    <property type="match status" value="1"/>
</dbReference>
<dbReference type="SUPFAM" id="SSF88697">
    <property type="entry name" value="PUA domain-like"/>
    <property type="match status" value="1"/>
</dbReference>
<comment type="function">
    <text evidence="1">Responsible for synthesis of pseudouridine from uracil-55 in the psi GC loop of transfer RNAs.</text>
</comment>
<comment type="catalytic activity">
    <reaction evidence="1">
        <text>uridine(55) in tRNA = pseudouridine(55) in tRNA</text>
        <dbReference type="Rhea" id="RHEA:42532"/>
        <dbReference type="Rhea" id="RHEA-COMP:10101"/>
        <dbReference type="Rhea" id="RHEA-COMP:10102"/>
        <dbReference type="ChEBI" id="CHEBI:65314"/>
        <dbReference type="ChEBI" id="CHEBI:65315"/>
        <dbReference type="EC" id="5.4.99.25"/>
    </reaction>
</comment>
<comment type="similarity">
    <text evidence="1">Belongs to the pseudouridine synthase TruB family. Type 1 subfamily.</text>
</comment>
<sequence>MAQVKRIRRNVSGIILLDKPLGFTSNAALQKVRWLLNAEKAGHTGSLDPLATGVLPLCFGEATKFSQYLLDSDKGYETLAQLGKTTTTADAEGEVLQERPVTVGQADIEAVLPKFRGQISQIPPMYSALKRDGQPLYKLARAGEVVEREPRSVTIARLELLAFEGDTARLAVDCSKGTYIRTLVEDIGEQLGCGAYVAELRRTQAGPFTLAQTVTLEELEAVHAEGGNEAVDRFLMPSDSGLQDWPLLQFSEASAFYWLNGQPVRAPDAPKFGMVRVQDHNGRFIGIGEVSEDGRIAPRRLIRSE</sequence>
<gene>
    <name evidence="1" type="primary">truB</name>
    <name type="ordered locus">Pfl01_0781</name>
</gene>
<accession>Q3KI82</accession>
<proteinExistence type="inferred from homology"/>